<organism>
    <name type="scientific">Pongo abelii</name>
    <name type="common">Sumatran orangutan</name>
    <name type="synonym">Pongo pygmaeus abelii</name>
    <dbReference type="NCBI Taxonomy" id="9601"/>
    <lineage>
        <taxon>Eukaryota</taxon>
        <taxon>Metazoa</taxon>
        <taxon>Chordata</taxon>
        <taxon>Craniata</taxon>
        <taxon>Vertebrata</taxon>
        <taxon>Euteleostomi</taxon>
        <taxon>Mammalia</taxon>
        <taxon>Eutheria</taxon>
        <taxon>Euarchontoglires</taxon>
        <taxon>Primates</taxon>
        <taxon>Haplorrhini</taxon>
        <taxon>Catarrhini</taxon>
        <taxon>Hominidae</taxon>
        <taxon>Pongo</taxon>
    </lineage>
</organism>
<protein>
    <recommendedName>
        <fullName>Coatomer subunit beta'</fullName>
    </recommendedName>
    <alternativeName>
        <fullName>Beta'-coat protein</fullName>
        <shortName>Beta'-COP</shortName>
    </alternativeName>
</protein>
<sequence>MPLRLDIKRKLTARSDRVKSVDLHPTEPWMLASLYNGSVCVWNHETQTLVKTFEVCDLPVRAAKFVARKNWVVTGADDMQIRVFNYNTLERVHMFEAHSDYIRCIAVHPTQPFILTSSDDMLIKLWDWDKKWSCSQVFEGHTHYVMQIVINPKDNNQFASASLDRTIKVWQLGSSSPNFTLEGHEKGVNCIDYYSGGDKPYLISGADDRLVKIWDYQNKTCVQTLEGHAQNVSCASFHPELPIIITGSEDGTVRIWHSSTYRLESTLNYGMERVWCVASLRGSNNVALGYDEGSIIVKLGREEPAMSMDANGKIIWAKHSEVQQANLKAMGDAEIKDGERLPLAVKDMGSCEIYPQTIQHNPNGRFVVVCGDGEYIIYTAMALRNKSFGSAQEFAWAHDSSEYAIRESNSIVKIFKNFKEKKSFKPDFGAESIYGGFLLGVRSVNGLAFYDWDNTELIRRIEIQPKHIFWSDSGELVCIATEESFFILKYLSEKVLAVQETHEGVTEDGIEDAFEVLGEIQEIVKTGLWVGDCFIYTSSVNRLNYYVGGEIVTIAHLDRTMYLLGYIPKDNRLYLGDKELNIVSYSLLVSVLEYQTAVMRRDFSMADKVLPTIPKEQRTRVAHFLEKQGFKQQALTVSTDPEHRFELALQLGELKIAYQLAVEAESEQKWKQLAELAISKCQFGLAQECLHHAQDYGGLLLLATASGNANMVNKLAEGAERDGKNNVAFMSYFLQGKVDACLELLIRTGRLPEAAFLARTYLPSQVSRVVKLWRENLSKVNQKAAESLADPTEYENLFPGLKEAFVVEEWVKETHAELWPAKQYPLVTPNEERNVMEEAKGFQPSRSTAQQELDGKPASPTPVIVASHTANKEEKSLLELEVDLDNLELVDIDTTDINLDEDILDD</sequence>
<name>COPB2_PONAB</name>
<evidence type="ECO:0000250" key="1"/>
<evidence type="ECO:0000250" key="2">
    <source>
        <dbReference type="UniProtKB" id="P35606"/>
    </source>
</evidence>
<evidence type="ECO:0000255" key="3"/>
<evidence type="ECO:0000256" key="4">
    <source>
        <dbReference type="SAM" id="MobiDB-lite"/>
    </source>
</evidence>
<evidence type="ECO:0000305" key="5"/>
<keyword id="KW-0007">Acetylation</keyword>
<keyword id="KW-0175">Coiled coil</keyword>
<keyword id="KW-0963">Cytoplasm</keyword>
<keyword id="KW-0968">Cytoplasmic vesicle</keyword>
<keyword id="KW-0931">ER-Golgi transport</keyword>
<keyword id="KW-0333">Golgi apparatus</keyword>
<keyword id="KW-0472">Membrane</keyword>
<keyword id="KW-0597">Phosphoprotein</keyword>
<keyword id="KW-0653">Protein transport</keyword>
<keyword id="KW-1185">Reference proteome</keyword>
<keyword id="KW-0677">Repeat</keyword>
<keyword id="KW-0813">Transport</keyword>
<keyword id="KW-0853">WD repeat</keyword>
<dbReference type="EMBL" id="CR860632">
    <property type="protein sequence ID" value="CAH92752.1"/>
    <property type="molecule type" value="mRNA"/>
</dbReference>
<dbReference type="RefSeq" id="NP_001126604.1">
    <property type="nucleotide sequence ID" value="NM_001133132.1"/>
</dbReference>
<dbReference type="SMR" id="Q5R664"/>
<dbReference type="FunCoup" id="Q5R664">
    <property type="interactions" value="2660"/>
</dbReference>
<dbReference type="STRING" id="9601.ENSPPYP00000015835"/>
<dbReference type="GeneID" id="100173601"/>
<dbReference type="KEGG" id="pon:100173601"/>
<dbReference type="CTD" id="9276"/>
<dbReference type="eggNOG" id="KOG0276">
    <property type="taxonomic scope" value="Eukaryota"/>
</dbReference>
<dbReference type="InParanoid" id="Q5R664"/>
<dbReference type="OrthoDB" id="2150324at2759"/>
<dbReference type="Proteomes" id="UP000001595">
    <property type="component" value="Unplaced"/>
</dbReference>
<dbReference type="GO" id="GO:0030126">
    <property type="term" value="C:COPI vesicle coat"/>
    <property type="evidence" value="ECO:0007669"/>
    <property type="project" value="TreeGrafter"/>
</dbReference>
<dbReference type="GO" id="GO:0005829">
    <property type="term" value="C:cytosol"/>
    <property type="evidence" value="ECO:0007669"/>
    <property type="project" value="UniProtKB-SubCell"/>
</dbReference>
<dbReference type="GO" id="GO:0000139">
    <property type="term" value="C:Golgi membrane"/>
    <property type="evidence" value="ECO:0007669"/>
    <property type="project" value="UniProtKB-SubCell"/>
</dbReference>
<dbReference type="GO" id="GO:0005198">
    <property type="term" value="F:structural molecule activity"/>
    <property type="evidence" value="ECO:0007669"/>
    <property type="project" value="InterPro"/>
</dbReference>
<dbReference type="GO" id="GO:0006888">
    <property type="term" value="P:endoplasmic reticulum to Golgi vesicle-mediated transport"/>
    <property type="evidence" value="ECO:0007669"/>
    <property type="project" value="TreeGrafter"/>
</dbReference>
<dbReference type="GO" id="GO:0006891">
    <property type="term" value="P:intra-Golgi vesicle-mediated transport"/>
    <property type="evidence" value="ECO:0007669"/>
    <property type="project" value="TreeGrafter"/>
</dbReference>
<dbReference type="GO" id="GO:0006886">
    <property type="term" value="P:intracellular protein transport"/>
    <property type="evidence" value="ECO:0007669"/>
    <property type="project" value="InterPro"/>
</dbReference>
<dbReference type="GO" id="GO:0006890">
    <property type="term" value="P:retrograde vesicle-mediated transport, Golgi to endoplasmic reticulum"/>
    <property type="evidence" value="ECO:0000250"/>
    <property type="project" value="UniProtKB"/>
</dbReference>
<dbReference type="CDD" id="cd22947">
    <property type="entry name" value="Coatomer_WDAD_beta-like"/>
    <property type="match status" value="1"/>
</dbReference>
<dbReference type="CDD" id="cd00200">
    <property type="entry name" value="WD40"/>
    <property type="match status" value="1"/>
</dbReference>
<dbReference type="FunFam" id="1.25.40.470:FF:000001">
    <property type="entry name" value="Coatomer subunit beta"/>
    <property type="match status" value="1"/>
</dbReference>
<dbReference type="FunFam" id="2.130.10.10:FF:000008">
    <property type="entry name" value="Coatomer subunit beta"/>
    <property type="match status" value="1"/>
</dbReference>
<dbReference type="Gene3D" id="1.25.40.470">
    <property type="match status" value="1"/>
</dbReference>
<dbReference type="Gene3D" id="2.130.10.10">
    <property type="entry name" value="YVTN repeat-like/Quinoprotein amine dehydrogenase"/>
    <property type="match status" value="1"/>
</dbReference>
<dbReference type="InterPro" id="IPR006692">
    <property type="entry name" value="Beta-prop_COPA/B_2nd"/>
</dbReference>
<dbReference type="InterPro" id="IPR050844">
    <property type="entry name" value="Coatomer_complex_subunit"/>
</dbReference>
<dbReference type="InterPro" id="IPR016453">
    <property type="entry name" value="COPB2"/>
</dbReference>
<dbReference type="InterPro" id="IPR020472">
    <property type="entry name" value="G-protein_beta_WD-40_rep"/>
</dbReference>
<dbReference type="InterPro" id="IPR056176">
    <property type="entry name" value="TPR_COPA_B"/>
</dbReference>
<dbReference type="InterPro" id="IPR015943">
    <property type="entry name" value="WD40/YVTN_repeat-like_dom_sf"/>
</dbReference>
<dbReference type="InterPro" id="IPR036322">
    <property type="entry name" value="WD40_repeat_dom_sf"/>
</dbReference>
<dbReference type="InterPro" id="IPR001680">
    <property type="entry name" value="WD40_rpt"/>
</dbReference>
<dbReference type="PANTHER" id="PTHR19876">
    <property type="entry name" value="COATOMER"/>
    <property type="match status" value="1"/>
</dbReference>
<dbReference type="PANTHER" id="PTHR19876:SF2">
    <property type="entry name" value="COATOMER SUBUNIT BETA"/>
    <property type="match status" value="1"/>
</dbReference>
<dbReference type="Pfam" id="PF04053">
    <property type="entry name" value="B-prop_COPA_B_2nd"/>
    <property type="match status" value="1"/>
</dbReference>
<dbReference type="Pfam" id="PF23953">
    <property type="entry name" value="TPR_COPA_B"/>
    <property type="match status" value="1"/>
</dbReference>
<dbReference type="Pfam" id="PF00400">
    <property type="entry name" value="WD40"/>
    <property type="match status" value="6"/>
</dbReference>
<dbReference type="PIRSF" id="PIRSF005567">
    <property type="entry name" value="Coatomer_beta'_subunit"/>
    <property type="match status" value="1"/>
</dbReference>
<dbReference type="PRINTS" id="PR00320">
    <property type="entry name" value="GPROTEINBRPT"/>
</dbReference>
<dbReference type="SMART" id="SM00320">
    <property type="entry name" value="WD40"/>
    <property type="match status" value="6"/>
</dbReference>
<dbReference type="SUPFAM" id="SSF50978">
    <property type="entry name" value="WD40 repeat-like"/>
    <property type="match status" value="2"/>
</dbReference>
<dbReference type="PROSITE" id="PS50082">
    <property type="entry name" value="WD_REPEATS_2"/>
    <property type="match status" value="5"/>
</dbReference>
<dbReference type="PROSITE" id="PS50294">
    <property type="entry name" value="WD_REPEATS_REGION"/>
    <property type="match status" value="1"/>
</dbReference>
<accession>Q5R664</accession>
<feature type="chain" id="PRO_0000330863" description="Coatomer subunit beta'">
    <location>
        <begin position="1"/>
        <end position="906"/>
    </location>
</feature>
<feature type="repeat" description="WD 1">
    <location>
        <begin position="13"/>
        <end position="52"/>
    </location>
</feature>
<feature type="repeat" description="WD 2">
    <location>
        <begin position="55"/>
        <end position="94"/>
    </location>
</feature>
<feature type="repeat" description="WD 3">
    <location>
        <begin position="97"/>
        <end position="136"/>
    </location>
</feature>
<feature type="repeat" description="WD 4">
    <location>
        <begin position="140"/>
        <end position="180"/>
    </location>
</feature>
<feature type="repeat" description="WD 5">
    <location>
        <begin position="183"/>
        <end position="224"/>
    </location>
</feature>
<feature type="repeat" description="WD 6">
    <location>
        <begin position="227"/>
        <end position="266"/>
    </location>
</feature>
<feature type="repeat" description="WD 7">
    <location>
        <begin position="350"/>
        <end position="388"/>
    </location>
</feature>
<feature type="repeat" description="WD 8">
    <location>
        <begin position="390"/>
        <end position="425"/>
    </location>
</feature>
<feature type="repeat" description="WD 9">
    <location>
        <begin position="746"/>
        <end position="783"/>
    </location>
</feature>
<feature type="region of interest" description="Disordered" evidence="4">
    <location>
        <begin position="837"/>
        <end position="863"/>
    </location>
</feature>
<feature type="coiled-coil region" evidence="3">
    <location>
        <begin position="866"/>
        <end position="890"/>
    </location>
</feature>
<feature type="modified residue" description="N6-acetyllysine" evidence="2">
    <location>
        <position position="627"/>
    </location>
</feature>
<feature type="modified residue" description="Phosphoserine" evidence="2">
    <location>
        <position position="859"/>
    </location>
</feature>
<feature type="modified residue" description="Phosphothreonine" evidence="2">
    <location>
        <position position="861"/>
    </location>
</feature>
<comment type="function">
    <text evidence="2">The coatomer is a cytosolic protein complex that binds to dilysine motifs and reversibly associates with Golgi non-clathrin-coated vesicles, which further mediate biosynthetic protein transport from the ER, via the Golgi up to the trans Golgi network. Coatomer complex is required for budding from Golgi membranes, and is essential for the retrograde Golgi-to-ER transport of dilysine-tagged proteins. In mammals, the coatomer can only be recruited by membranes associated to ADP-ribosylation factors (ARFs), which are small GTP-binding proteins; the complex also influences the Golgi structural integrity, as well as the processing, activity, and endocytic recycling of LDL receptors (By similarity).</text>
</comment>
<comment type="function">
    <text evidence="1">This coatomer complex protein, essential for Golgi budding and vesicular trafficking, is a selective binding protein (RACK) for protein kinase C, epsilon type. It binds to Golgi membranes in a GTP-dependent manner (By similarity).</text>
</comment>
<comment type="subunit">
    <text evidence="1 2">Oligomeric complex that consists of at least the alpha, beta, beta', gamma, delta, epsilon and zeta subunits. Probably interacts with PEX11A. Interacts with SCYL1. Interacts with JAGN1 (By similarity).</text>
</comment>
<comment type="subcellular location">
    <subcellularLocation>
        <location evidence="1">Cytoplasm</location>
        <location evidence="1">Cytosol</location>
    </subcellularLocation>
    <subcellularLocation>
        <location evidence="1">Golgi apparatus membrane</location>
        <topology evidence="1">Peripheral membrane protein</topology>
        <orientation evidence="1">Cytoplasmic side</orientation>
    </subcellularLocation>
    <subcellularLocation>
        <location evidence="1">Cytoplasmic vesicle</location>
        <location evidence="1">COPI-coated vesicle membrane</location>
        <topology evidence="1">Peripheral membrane protein</topology>
        <orientation evidence="1">Cytoplasmic side</orientation>
    </subcellularLocation>
    <text evidence="1">The coatomer is cytoplasmic or polymerized on the cytoplasmic side of the Golgi, as well as on the vesicles/buds originating from it. Shows only a slight preference for the cis-Golgi apparatus, compared with the trans-Golgi.</text>
</comment>
<comment type="similarity">
    <text evidence="5">Belongs to the WD repeat COPB2 family.</text>
</comment>
<proteinExistence type="evidence at transcript level"/>
<reference key="1">
    <citation type="submission" date="2004-11" db="EMBL/GenBank/DDBJ databases">
        <authorList>
            <consortium name="The German cDNA consortium"/>
        </authorList>
    </citation>
    <scope>NUCLEOTIDE SEQUENCE [LARGE SCALE MRNA]</scope>
    <source>
        <tissue>Brain cortex</tissue>
    </source>
</reference>
<gene>
    <name type="primary">COPB2</name>
</gene>